<accession>O07750</accession>
<accession>F2GHR3</accession>
<accession>I6YBU9</accession>
<accession>L0T7Z2</accession>
<proteinExistence type="evidence at protein level"/>
<evidence type="ECO:0000255" key="1">
    <source>
        <dbReference type="PROSITE-ProRule" id="PRU00303"/>
    </source>
</evidence>
<evidence type="ECO:0000269" key="2">
    <source>
    </source>
</evidence>
<evidence type="ECO:0000305" key="3"/>
<feature type="signal peptide" evidence="1">
    <location>
        <begin position="1"/>
        <end position="21"/>
    </location>
</feature>
<feature type="chain" id="PRO_0000434268" description="Probable lipoprotein LppE" evidence="1">
    <location>
        <begin position="22"/>
        <end position="140"/>
    </location>
</feature>
<feature type="lipid moiety-binding region" description="N-palmitoyl cysteine" evidence="1">
    <location>
        <position position="22"/>
    </location>
</feature>
<feature type="lipid moiety-binding region" description="S-diacylglycerol cysteine" evidence="1">
    <location>
        <position position="22"/>
    </location>
</feature>
<sequence length="140" mass="14975">MCNRLVTVTGVAMVVAAGLSACGQAQTVPRKAARLTIDGVTHTTRPATCSQEHSYRTIDIRNHDSTVQAVVLLSGDRVIPQWVKIRNVDGFNGSFWHGGVGNARADRARNTYTVAGSAYGISSKKPNTVVSTDFNILAEC</sequence>
<keyword id="KW-1003">Cell membrane</keyword>
<keyword id="KW-0449">Lipoprotein</keyword>
<keyword id="KW-0472">Membrane</keyword>
<keyword id="KW-0564">Palmitate</keyword>
<keyword id="KW-1185">Reference proteome</keyword>
<keyword id="KW-0732">Signal</keyword>
<reference key="1">
    <citation type="journal article" date="1998" name="Nature">
        <title>Deciphering the biology of Mycobacterium tuberculosis from the complete genome sequence.</title>
        <authorList>
            <person name="Cole S.T."/>
            <person name="Brosch R."/>
            <person name="Parkhill J."/>
            <person name="Garnier T."/>
            <person name="Churcher C.M."/>
            <person name="Harris D.E."/>
            <person name="Gordon S.V."/>
            <person name="Eiglmeier K."/>
            <person name="Gas S."/>
            <person name="Barry C.E. III"/>
            <person name="Tekaia F."/>
            <person name="Badcock K."/>
            <person name="Basham D."/>
            <person name="Brown D."/>
            <person name="Chillingworth T."/>
            <person name="Connor R."/>
            <person name="Davies R.M."/>
            <person name="Devlin K."/>
            <person name="Feltwell T."/>
            <person name="Gentles S."/>
            <person name="Hamlin N."/>
            <person name="Holroyd S."/>
            <person name="Hornsby T."/>
            <person name="Jagels K."/>
            <person name="Krogh A."/>
            <person name="McLean J."/>
            <person name="Moule S."/>
            <person name="Murphy L.D."/>
            <person name="Oliver S."/>
            <person name="Osborne J."/>
            <person name="Quail M.A."/>
            <person name="Rajandream M.A."/>
            <person name="Rogers J."/>
            <person name="Rutter S."/>
            <person name="Seeger K."/>
            <person name="Skelton S."/>
            <person name="Squares S."/>
            <person name="Squares R."/>
            <person name="Sulston J.E."/>
            <person name="Taylor K."/>
            <person name="Whitehead S."/>
            <person name="Barrell B.G."/>
        </authorList>
    </citation>
    <scope>NUCLEOTIDE SEQUENCE [LARGE SCALE GENOMIC DNA]</scope>
    <source>
        <strain>ATCC 25618 / H37Rv</strain>
    </source>
</reference>
<reference key="2">
    <citation type="journal article" date="2011" name="J. Proteomics">
        <title>Bacterial proteins with cleaved or uncleaved signal peptides of the general secretory pathway.</title>
        <authorList>
            <person name="de Souza G.A."/>
            <person name="Leversen N.A."/>
            <person name="Maalen H."/>
            <person name="Wiker H.G."/>
        </authorList>
    </citation>
    <scope>SUBCELLULAR LOCATION</scope>
</reference>
<reference key="3">
    <citation type="journal article" date="2011" name="Mol. Cell. Proteomics">
        <title>Proteogenomic analysis of Mycobacterium tuberculosis by high resolution mass spectrometry.</title>
        <authorList>
            <person name="Kelkar D.S."/>
            <person name="Kumar D."/>
            <person name="Kumar P."/>
            <person name="Balakrishnan L."/>
            <person name="Muthusamy B."/>
            <person name="Yadav A.K."/>
            <person name="Shrivastava P."/>
            <person name="Marimuthu A."/>
            <person name="Anand S."/>
            <person name="Sundaram H."/>
            <person name="Kingsbury R."/>
            <person name="Harsha H.C."/>
            <person name="Nair B."/>
            <person name="Prasad T.S."/>
            <person name="Chauhan D.S."/>
            <person name="Katoch K."/>
            <person name="Katoch V.M."/>
            <person name="Kumar P."/>
            <person name="Chaerkady R."/>
            <person name="Ramachandran S."/>
            <person name="Dash D."/>
            <person name="Pandey A."/>
        </authorList>
    </citation>
    <scope>IDENTIFICATION BY MASS SPECTROMETRY [LARGE SCALE ANALYSIS]</scope>
    <source>
        <strain>ATCC 25618 / H37Rv</strain>
    </source>
</reference>
<name>LPPE_MYCTU</name>
<organism>
    <name type="scientific">Mycobacterium tuberculosis (strain ATCC 25618 / H37Rv)</name>
    <dbReference type="NCBI Taxonomy" id="83332"/>
    <lineage>
        <taxon>Bacteria</taxon>
        <taxon>Bacillati</taxon>
        <taxon>Actinomycetota</taxon>
        <taxon>Actinomycetes</taxon>
        <taxon>Mycobacteriales</taxon>
        <taxon>Mycobacteriaceae</taxon>
        <taxon>Mycobacterium</taxon>
        <taxon>Mycobacterium tuberculosis complex</taxon>
    </lineage>
</organism>
<gene>
    <name type="primary">lppE</name>
    <name type="ordered locus">Rv1881c</name>
</gene>
<comment type="subcellular location">
    <subcellularLocation>
        <location evidence="1">Cell membrane</location>
        <topology evidence="1">Lipid-anchor</topology>
    </subcellularLocation>
    <text evidence="2">Found in membrane and whole cell lysates.</text>
</comment>
<comment type="similarity">
    <text evidence="3">Belongs to the mycobacterial 19 kDa antigen family.</text>
</comment>
<dbReference type="EMBL" id="AL123456">
    <property type="protein sequence ID" value="CCP44647.1"/>
    <property type="molecule type" value="Genomic_DNA"/>
</dbReference>
<dbReference type="RefSeq" id="NP_216397.1">
    <property type="nucleotide sequence ID" value="NC_000962.3"/>
</dbReference>
<dbReference type="RefSeq" id="WP_003409409.1">
    <property type="nucleotide sequence ID" value="NZ_NVQJ01000013.1"/>
</dbReference>
<dbReference type="SMR" id="O07750"/>
<dbReference type="STRING" id="83332.Rv1881c"/>
<dbReference type="PaxDb" id="83332-Rv1881c"/>
<dbReference type="DNASU" id="885762"/>
<dbReference type="GeneID" id="885762"/>
<dbReference type="KEGG" id="mtu:Rv1881c"/>
<dbReference type="KEGG" id="mtv:RVBD_1881c"/>
<dbReference type="PATRIC" id="fig|83332.111.peg.2091"/>
<dbReference type="TubercuList" id="Rv1881c"/>
<dbReference type="eggNOG" id="ENOG5031JVB">
    <property type="taxonomic scope" value="Bacteria"/>
</dbReference>
<dbReference type="HOGENOM" id="CLU_131476_0_0_11"/>
<dbReference type="InParanoid" id="O07750"/>
<dbReference type="OrthoDB" id="4727034at2"/>
<dbReference type="Proteomes" id="UP000001584">
    <property type="component" value="Chromosome"/>
</dbReference>
<dbReference type="GO" id="GO:0009274">
    <property type="term" value="C:peptidoglycan-based cell wall"/>
    <property type="evidence" value="ECO:0007005"/>
    <property type="project" value="MTBBASE"/>
</dbReference>
<dbReference type="GO" id="GO:0005886">
    <property type="term" value="C:plasma membrane"/>
    <property type="evidence" value="ECO:0007669"/>
    <property type="project" value="UniProtKB-SubCell"/>
</dbReference>
<dbReference type="InterPro" id="IPR008691">
    <property type="entry name" value="LpqH"/>
</dbReference>
<dbReference type="Pfam" id="PF05481">
    <property type="entry name" value="Myco_19_kDa"/>
    <property type="match status" value="1"/>
</dbReference>
<dbReference type="PROSITE" id="PS51257">
    <property type="entry name" value="PROKAR_LIPOPROTEIN"/>
    <property type="match status" value="1"/>
</dbReference>
<protein>
    <recommendedName>
        <fullName evidence="3">Probable lipoprotein LppE</fullName>
    </recommendedName>
</protein>